<feature type="signal peptide" evidence="1">
    <location>
        <begin position="1"/>
        <end position="24"/>
    </location>
</feature>
<feature type="chain" id="PRO_0000042985" description="V0 assembly protein 1">
    <location>
        <begin position="25"/>
        <end position="265"/>
    </location>
</feature>
<feature type="topological domain" description="Vacuolar" evidence="1">
    <location>
        <begin position="25"/>
        <end position="223"/>
    </location>
</feature>
<feature type="transmembrane region" description="Helical" evidence="1">
    <location>
        <begin position="224"/>
        <end position="244"/>
    </location>
</feature>
<feature type="topological domain" description="Cytoplasmic" evidence="1">
    <location>
        <begin position="245"/>
        <end position="265"/>
    </location>
</feature>
<feature type="short sequence motif" description="ER retention motif">
    <location>
        <begin position="262"/>
        <end position="265"/>
    </location>
</feature>
<feature type="glycosylation site" description="N-linked (GlcNAc...) asparagine" evidence="1">
    <location>
        <position position="69"/>
    </location>
</feature>
<feature type="glycosylation site" description="N-linked (GlcNAc...) asparagine" evidence="1">
    <location>
        <position position="104"/>
    </location>
</feature>
<feature type="glycosylation site" description="N-linked (GlcNAc...) asparagine" evidence="1">
    <location>
        <position position="172"/>
    </location>
</feature>
<feature type="strand" evidence="9">
    <location>
        <begin position="212"/>
        <end position="215"/>
    </location>
</feature>
<feature type="strand" evidence="10">
    <location>
        <begin position="217"/>
        <end position="219"/>
    </location>
</feature>
<feature type="helix" evidence="10">
    <location>
        <begin position="221"/>
        <end position="245"/>
    </location>
</feature>
<feature type="strand" evidence="10">
    <location>
        <begin position="253"/>
        <end position="255"/>
    </location>
</feature>
<feature type="turn" evidence="8">
    <location>
        <begin position="260"/>
        <end position="262"/>
    </location>
</feature>
<organism>
    <name type="scientific">Saccharomyces cerevisiae (strain ATCC 204508 / S288c)</name>
    <name type="common">Baker's yeast</name>
    <dbReference type="NCBI Taxonomy" id="559292"/>
    <lineage>
        <taxon>Eukaryota</taxon>
        <taxon>Fungi</taxon>
        <taxon>Dikarya</taxon>
        <taxon>Ascomycota</taxon>
        <taxon>Saccharomycotina</taxon>
        <taxon>Saccharomycetes</taxon>
        <taxon>Saccharomycetales</taxon>
        <taxon>Saccharomycetaceae</taxon>
        <taxon>Saccharomyces</taxon>
    </lineage>
</organism>
<name>VOA1_YEAST</name>
<reference key="1">
    <citation type="journal article" date="1997" name="Nature">
        <title>The nucleotide sequence of Saccharomyces cerevisiae chromosome VII.</title>
        <authorList>
            <person name="Tettelin H."/>
            <person name="Agostoni-Carbone M.L."/>
            <person name="Albermann K."/>
            <person name="Albers M."/>
            <person name="Arroyo J."/>
            <person name="Backes U."/>
            <person name="Barreiros T."/>
            <person name="Bertani I."/>
            <person name="Bjourson A.J."/>
            <person name="Brueckner M."/>
            <person name="Bruschi C.V."/>
            <person name="Carignani G."/>
            <person name="Castagnoli L."/>
            <person name="Cerdan E."/>
            <person name="Clemente M.L."/>
            <person name="Coblenz A."/>
            <person name="Coglievina M."/>
            <person name="Coissac E."/>
            <person name="Defoor E."/>
            <person name="Del Bino S."/>
            <person name="Delius H."/>
            <person name="Delneri D."/>
            <person name="de Wergifosse P."/>
            <person name="Dujon B."/>
            <person name="Durand P."/>
            <person name="Entian K.-D."/>
            <person name="Eraso P."/>
            <person name="Escribano V."/>
            <person name="Fabiani L."/>
            <person name="Fartmann B."/>
            <person name="Feroli F."/>
            <person name="Feuermann M."/>
            <person name="Frontali L."/>
            <person name="Garcia-Gonzalez M."/>
            <person name="Garcia-Saez M.I."/>
            <person name="Goffeau A."/>
            <person name="Guerreiro P."/>
            <person name="Hani J."/>
            <person name="Hansen M."/>
            <person name="Hebling U."/>
            <person name="Hernandez K."/>
            <person name="Heumann K."/>
            <person name="Hilger F."/>
            <person name="Hofmann B."/>
            <person name="Indge K.J."/>
            <person name="James C.M."/>
            <person name="Klima R."/>
            <person name="Koetter P."/>
            <person name="Kramer B."/>
            <person name="Kramer W."/>
            <person name="Lauquin G."/>
            <person name="Leuther H."/>
            <person name="Louis E.J."/>
            <person name="Maillier E."/>
            <person name="Marconi A."/>
            <person name="Martegani E."/>
            <person name="Mazon M.J."/>
            <person name="Mazzoni C."/>
            <person name="McReynolds A.D.K."/>
            <person name="Melchioretto P."/>
            <person name="Mewes H.-W."/>
            <person name="Minenkova O."/>
            <person name="Mueller-Auer S."/>
            <person name="Nawrocki A."/>
            <person name="Netter P."/>
            <person name="Neu R."/>
            <person name="Nombela C."/>
            <person name="Oliver S.G."/>
            <person name="Panzeri L."/>
            <person name="Paoluzi S."/>
            <person name="Plevani P."/>
            <person name="Portetelle D."/>
            <person name="Portillo F."/>
            <person name="Potier S."/>
            <person name="Purnelle B."/>
            <person name="Rieger M."/>
            <person name="Riles L."/>
            <person name="Rinaldi T."/>
            <person name="Robben J."/>
            <person name="Rodrigues-Pousada C."/>
            <person name="Rodriguez-Belmonte E."/>
            <person name="Rodriguez-Torres A.M."/>
            <person name="Rose M."/>
            <person name="Ruzzi M."/>
            <person name="Saliola M."/>
            <person name="Sanchez-Perez M."/>
            <person name="Schaefer B."/>
            <person name="Schaefer M."/>
            <person name="Scharfe M."/>
            <person name="Schmidheini T."/>
            <person name="Schreer A."/>
            <person name="Skala J."/>
            <person name="Souciet J.-L."/>
            <person name="Steensma H.Y."/>
            <person name="Talla E."/>
            <person name="Thierry A."/>
            <person name="Vandenbol M."/>
            <person name="van der Aart Q.J.M."/>
            <person name="Van Dyck L."/>
            <person name="Vanoni M."/>
            <person name="Verhasselt P."/>
            <person name="Voet M."/>
            <person name="Volckaert G."/>
            <person name="Wambutt R."/>
            <person name="Watson M.D."/>
            <person name="Weber N."/>
            <person name="Wedler E."/>
            <person name="Wedler H."/>
            <person name="Wipfli P."/>
            <person name="Wolf K."/>
            <person name="Wright L.F."/>
            <person name="Zaccaria P."/>
            <person name="Zimmermann M."/>
            <person name="Zollner A."/>
            <person name="Kleine K."/>
        </authorList>
    </citation>
    <scope>NUCLEOTIDE SEQUENCE [LARGE SCALE GENOMIC DNA]</scope>
    <source>
        <strain>ATCC 204508 / S288c</strain>
    </source>
</reference>
<reference key="2">
    <citation type="journal article" date="2014" name="G3 (Bethesda)">
        <title>The reference genome sequence of Saccharomyces cerevisiae: Then and now.</title>
        <authorList>
            <person name="Engel S.R."/>
            <person name="Dietrich F.S."/>
            <person name="Fisk D.G."/>
            <person name="Binkley G."/>
            <person name="Balakrishnan R."/>
            <person name="Costanzo M.C."/>
            <person name="Dwight S.S."/>
            <person name="Hitz B.C."/>
            <person name="Karra K."/>
            <person name="Nash R.S."/>
            <person name="Weng S."/>
            <person name="Wong E.D."/>
            <person name="Lloyd P."/>
            <person name="Skrzypek M.S."/>
            <person name="Miyasato S.R."/>
            <person name="Simison M."/>
            <person name="Cherry J.M."/>
        </authorList>
    </citation>
    <scope>GENOME REANNOTATION</scope>
    <source>
        <strain>ATCC 204508 / S288c</strain>
    </source>
</reference>
<reference key="3">
    <citation type="submission" date="2005-06" db="UniProtKB">
        <authorList>
            <person name="Bienvenut W.V."/>
            <person name="Peters C."/>
        </authorList>
    </citation>
    <scope>PROTEIN SEQUENCE OF 29-38 AND 144-166</scope>
    <scope>IDENTIFICATION BY MASS SPECTROMETRY</scope>
</reference>
<reference key="4">
    <citation type="journal article" date="2003" name="Nature">
        <title>Global analysis of protein localization in budding yeast.</title>
        <authorList>
            <person name="Huh W.-K."/>
            <person name="Falvo J.V."/>
            <person name="Gerke L.C."/>
            <person name="Carroll A.S."/>
            <person name="Howson R.W."/>
            <person name="Weissman J.S."/>
            <person name="O'Shea E.K."/>
        </authorList>
    </citation>
    <scope>SUBCELLULAR LOCATION [LARGE SCALE ANALYSIS]</scope>
</reference>
<reference key="5">
    <citation type="journal article" date="2003" name="Nature">
        <title>Global analysis of protein expression in yeast.</title>
        <authorList>
            <person name="Ghaemmaghami S."/>
            <person name="Huh W.-K."/>
            <person name="Bower K."/>
            <person name="Howson R.W."/>
            <person name="Belle A."/>
            <person name="Dephoure N."/>
            <person name="O'Shea E.K."/>
            <person name="Weissman J.S."/>
        </authorList>
    </citation>
    <scope>LEVEL OF PROTEIN EXPRESSION [LARGE SCALE ANALYSIS]</scope>
</reference>
<reference key="6">
    <citation type="journal article" date="2008" name="Mol. Biol. Cell">
        <title>Voa1p functions in V-ATPase assembly in the yeast endoplasmic reticulum.</title>
        <authorList>
            <person name="Ryan M."/>
            <person name="Graham L.A."/>
            <person name="Stevens T.H."/>
        </authorList>
    </citation>
    <scope>FUNCTION</scope>
    <scope>IDENTIFICATION BY MASS SPECTROMETRY</scope>
    <scope>SUBCELLULAR LOCATION</scope>
    <scope>GLYCOSYLATION</scope>
    <scope>INTERACTION WITH VMA21</scope>
    <scope>ASSOCIATION WITH THE V0 COMPLEX</scope>
</reference>
<reference evidence="7" key="7">
    <citation type="journal article" date="2018" name="Mol. Cell">
        <title>The 3.5-A cryoEM structure of nanodisc-reconstituted yeast vacuolar ATPase V0 proton channel.</title>
        <authorList>
            <person name="Roh S.H."/>
            <person name="Stam N.J."/>
            <person name="Hryc C.F."/>
            <person name="Couoh-Cardel S."/>
            <person name="Pintilie G."/>
            <person name="Chiu W."/>
            <person name="Wilkens S."/>
        </authorList>
    </citation>
    <scope>STRUCTURE BY ELECTRON MICROSCOPY (3.50 ANGSTROMS)</scope>
    <scope>IDENTIFICATION IN THE V-ATPASE COMPLEX</scope>
    <scope>DISRUPTION PHENOTYPE</scope>
</reference>
<proteinExistence type="evidence at protein level"/>
<protein>
    <recommendedName>
        <fullName>V0 assembly protein 1</fullName>
    </recommendedName>
</protein>
<comment type="function">
    <text evidence="4 5">Accessory component of the V0 complex of vacuolar(H+)-ATPase (V-ATPase), a multisubunit enzyme composed of a peripheral complex (V1) that hydrolyzes ATP and a membrane integral complex (V0) that translocates protons (PubMed:29526695). V-ATPase is responsible for acidifying and maintaining the pH of intracellular compartments (PubMed:29526695). Functions with VMA21 in assembly of the V0 complex (PubMed:18799613).</text>
</comment>
<comment type="subunit">
    <text evidence="4 5">V-ATPase is a heteromultimeric enzyme composed of a peripheral catalytic V1 complex (components A to H) attached to an integral membrane V0 proton pore complex (components: a, c, c', c'', d, e, f and VOA1) (PubMed:29526695). Interacts with VMA21 (PubMed:18799613). Associates with the assembling V0 complex (PubMed:18799613).</text>
</comment>
<comment type="subcellular location">
    <subcellularLocation>
        <location evidence="2">Vacuole membrane</location>
        <topology evidence="2">Single-pass type I membrane protein</topology>
    </subcellularLocation>
    <subcellularLocation>
        <location evidence="4">Endoplasmic reticulum membrane</location>
        <topology evidence="4">Single-pass type I membrane protein</topology>
    </subcellularLocation>
</comment>
<comment type="disruption phenotype">
    <text evidence="5">Reduces association of VMA6 with the V-type proton ATPase (PubMed:29526695). Decreases VPH1 protein level (PubMed:29526695).</text>
</comment>
<comment type="miscellaneous">
    <text evidence="3">Present with 12764 molecules/cell in log phase SD medium.</text>
</comment>
<comment type="similarity">
    <text evidence="6">Belongs to the VOA1 family.</text>
</comment>
<evidence type="ECO:0000255" key="1"/>
<evidence type="ECO:0000269" key="2">
    <source>
    </source>
</evidence>
<evidence type="ECO:0000269" key="3">
    <source>
    </source>
</evidence>
<evidence type="ECO:0000269" key="4">
    <source>
    </source>
</evidence>
<evidence type="ECO:0000269" key="5">
    <source>
    </source>
</evidence>
<evidence type="ECO:0000305" key="6"/>
<evidence type="ECO:0007744" key="7">
    <source>
        <dbReference type="PDB" id="6C6L"/>
    </source>
</evidence>
<evidence type="ECO:0007829" key="8">
    <source>
        <dbReference type="PDB" id="6M0R"/>
    </source>
</evidence>
<evidence type="ECO:0007829" key="9">
    <source>
        <dbReference type="PDB" id="6PE4"/>
    </source>
</evidence>
<evidence type="ECO:0007829" key="10">
    <source>
        <dbReference type="PDB" id="8EAS"/>
    </source>
</evidence>
<gene>
    <name type="primary">VOA1</name>
    <name type="ordered locus">YGR106C</name>
</gene>
<accession>P53262</accession>
<accession>D6VUN8</accession>
<dbReference type="EMBL" id="Z72891">
    <property type="protein sequence ID" value="CAA97110.1"/>
    <property type="molecule type" value="Genomic_DNA"/>
</dbReference>
<dbReference type="EMBL" id="BK006941">
    <property type="protein sequence ID" value="DAA08199.1"/>
    <property type="molecule type" value="Genomic_DNA"/>
</dbReference>
<dbReference type="PIR" id="S64413">
    <property type="entry name" value="S64413"/>
</dbReference>
<dbReference type="RefSeq" id="NP_011620.1">
    <property type="nucleotide sequence ID" value="NM_001181235.1"/>
</dbReference>
<dbReference type="PDB" id="6C6L">
    <property type="method" value="EM"/>
    <property type="resolution" value="3.50 A"/>
    <property type="chains" value="N=1-265"/>
</dbReference>
<dbReference type="PDB" id="6M0R">
    <property type="method" value="EM"/>
    <property type="resolution" value="2.70 A"/>
    <property type="chains" value="N=212-263"/>
</dbReference>
<dbReference type="PDB" id="6M0S">
    <property type="method" value="EM"/>
    <property type="resolution" value="3.60 A"/>
    <property type="chains" value="N=212-263"/>
</dbReference>
<dbReference type="PDB" id="6O7T">
    <property type="method" value="EM"/>
    <property type="resolution" value="3.20 A"/>
    <property type="chains" value="b=1-265"/>
</dbReference>
<dbReference type="PDB" id="6O7U">
    <property type="method" value="EM"/>
    <property type="resolution" value="3.10 A"/>
    <property type="chains" value="b=1-265"/>
</dbReference>
<dbReference type="PDB" id="6O7V">
    <property type="method" value="EM"/>
    <property type="resolution" value="6.60 A"/>
    <property type="chains" value="b=1-265"/>
</dbReference>
<dbReference type="PDB" id="6O7W">
    <property type="method" value="EM"/>
    <property type="resolution" value="7.00 A"/>
    <property type="chains" value="b=1-265"/>
</dbReference>
<dbReference type="PDB" id="6O7X">
    <property type="method" value="EM"/>
    <property type="resolution" value="8.70 A"/>
    <property type="chains" value="b=1-265"/>
</dbReference>
<dbReference type="PDB" id="6PE4">
    <property type="method" value="EM"/>
    <property type="resolution" value="3.10 A"/>
    <property type="chains" value="B=1-265"/>
</dbReference>
<dbReference type="PDB" id="6PE5">
    <property type="method" value="EM"/>
    <property type="resolution" value="3.20 A"/>
    <property type="chains" value="B=1-265"/>
</dbReference>
<dbReference type="PDB" id="7FDA">
    <property type="method" value="EM"/>
    <property type="resolution" value="4.20 A"/>
    <property type="chains" value="e=1-265"/>
</dbReference>
<dbReference type="PDB" id="7FDB">
    <property type="method" value="EM"/>
    <property type="resolution" value="4.80 A"/>
    <property type="chains" value="e=1-265"/>
</dbReference>
<dbReference type="PDB" id="7FDC">
    <property type="method" value="EM"/>
    <property type="resolution" value="6.60 A"/>
    <property type="chains" value="e=1-265"/>
</dbReference>
<dbReference type="PDB" id="7TAO">
    <property type="method" value="EM"/>
    <property type="resolution" value="3.20 A"/>
    <property type="chains" value="N=1-265"/>
</dbReference>
<dbReference type="PDB" id="7TAP">
    <property type="method" value="EM"/>
    <property type="resolution" value="2.80 A"/>
    <property type="chains" value="N=1-265"/>
</dbReference>
<dbReference type="PDB" id="7TMR">
    <property type="method" value="EM"/>
    <property type="resolution" value="3.50 A"/>
    <property type="chains" value="b=1-265"/>
</dbReference>
<dbReference type="PDB" id="7TMS">
    <property type="method" value="EM"/>
    <property type="resolution" value="3.80 A"/>
    <property type="chains" value="b=1-265"/>
</dbReference>
<dbReference type="PDB" id="7TMT">
    <property type="method" value="EM"/>
    <property type="resolution" value="3.80 A"/>
    <property type="chains" value="b=1-265"/>
</dbReference>
<dbReference type="PDB" id="8EAS">
    <property type="method" value="EM"/>
    <property type="resolution" value="2.60 A"/>
    <property type="chains" value="b=1-265"/>
</dbReference>
<dbReference type="PDB" id="8EAT">
    <property type="method" value="EM"/>
    <property type="resolution" value="3.10 A"/>
    <property type="chains" value="b=1-265"/>
</dbReference>
<dbReference type="PDB" id="8EAU">
    <property type="method" value="EM"/>
    <property type="resolution" value="3.10 A"/>
    <property type="chains" value="b=1-265"/>
</dbReference>
<dbReference type="PDB" id="9E76">
    <property type="method" value="EM"/>
    <property type="resolution" value="3.40 A"/>
    <property type="chains" value="N=1-265"/>
</dbReference>
<dbReference type="PDB" id="9E7L">
    <property type="method" value="EM"/>
    <property type="resolution" value="3.33 A"/>
    <property type="chains" value="N=1-265"/>
</dbReference>
<dbReference type="PDB" id="9MJ4">
    <property type="method" value="EM"/>
    <property type="resolution" value="3.70 A"/>
    <property type="chains" value="N=1-265"/>
</dbReference>
<dbReference type="PDBsum" id="6C6L"/>
<dbReference type="PDBsum" id="6M0R"/>
<dbReference type="PDBsum" id="6M0S"/>
<dbReference type="PDBsum" id="6O7T"/>
<dbReference type="PDBsum" id="6O7U"/>
<dbReference type="PDBsum" id="6O7V"/>
<dbReference type="PDBsum" id="6O7W"/>
<dbReference type="PDBsum" id="6O7X"/>
<dbReference type="PDBsum" id="6PE4"/>
<dbReference type="PDBsum" id="6PE5"/>
<dbReference type="PDBsum" id="7FDA"/>
<dbReference type="PDBsum" id="7FDB"/>
<dbReference type="PDBsum" id="7FDC"/>
<dbReference type="PDBsum" id="7TAO"/>
<dbReference type="PDBsum" id="7TAP"/>
<dbReference type="PDBsum" id="7TMR"/>
<dbReference type="PDBsum" id="7TMS"/>
<dbReference type="PDBsum" id="7TMT"/>
<dbReference type="PDBsum" id="8EAS"/>
<dbReference type="PDBsum" id="8EAT"/>
<dbReference type="PDBsum" id="8EAU"/>
<dbReference type="PDBsum" id="9E76"/>
<dbReference type="PDBsum" id="9E7L"/>
<dbReference type="PDBsum" id="9MJ4"/>
<dbReference type="EMDB" id="EMD-0644"/>
<dbReference type="EMDB" id="EMD-0645"/>
<dbReference type="EMDB" id="EMD-0646"/>
<dbReference type="EMDB" id="EMD-0647"/>
<dbReference type="EMDB" id="EMD-0648"/>
<dbReference type="EMDB" id="EMD-20322"/>
<dbReference type="EMDB" id="EMD-20323"/>
<dbReference type="EMDB" id="EMD-25779"/>
<dbReference type="EMDB" id="EMD-25780"/>
<dbReference type="EMDB" id="EMD-26000"/>
<dbReference type="EMDB" id="EMD-26001"/>
<dbReference type="EMDB" id="EMD-26002"/>
<dbReference type="EMDB" id="EMD-27984"/>
<dbReference type="EMDB" id="EMD-27985"/>
<dbReference type="EMDB" id="EMD-27986"/>
<dbReference type="EMDB" id="EMD-30034"/>
<dbReference type="EMDB" id="EMD-30035"/>
<dbReference type="EMDB" id="EMD-31538"/>
<dbReference type="EMDB" id="EMD-31539"/>
<dbReference type="EMDB" id="EMD-31540"/>
<dbReference type="EMDB" id="EMD-47659"/>
<dbReference type="EMDB" id="EMD-47679"/>
<dbReference type="EMDB" id="EMD-48311"/>
<dbReference type="EMDB" id="EMD-7348"/>
<dbReference type="SMR" id="P53262"/>
<dbReference type="BioGRID" id="33349">
    <property type="interactions" value="487"/>
</dbReference>
<dbReference type="ComplexPortal" id="CPX-1192">
    <property type="entry name" value="Vacuolar proton translocating ATPase complex, Golgi variant"/>
</dbReference>
<dbReference type="ComplexPortal" id="CPX-1193">
    <property type="entry name" value="Vacuolar proton translocating ATPase complex, vacuole variant"/>
</dbReference>
<dbReference type="FunCoup" id="P53262">
    <property type="interactions" value="60"/>
</dbReference>
<dbReference type="IntAct" id="P53262">
    <property type="interactions" value="23"/>
</dbReference>
<dbReference type="MINT" id="P53262"/>
<dbReference type="STRING" id="4932.YGR106C"/>
<dbReference type="GlyCosmos" id="P53262">
    <property type="glycosylation" value="3 sites, No reported glycans"/>
</dbReference>
<dbReference type="GlyGen" id="P53262">
    <property type="glycosylation" value="3 sites"/>
</dbReference>
<dbReference type="PaxDb" id="4932-YGR106C"/>
<dbReference type="PeptideAtlas" id="P53262"/>
<dbReference type="EnsemblFungi" id="YGR106C_mRNA">
    <property type="protein sequence ID" value="YGR106C"/>
    <property type="gene ID" value="YGR106C"/>
</dbReference>
<dbReference type="GeneID" id="852998"/>
<dbReference type="KEGG" id="sce:YGR106C"/>
<dbReference type="AGR" id="SGD:S000003338"/>
<dbReference type="SGD" id="S000003338">
    <property type="gene designation" value="VOA1"/>
</dbReference>
<dbReference type="VEuPathDB" id="FungiDB:YGR106C"/>
<dbReference type="eggNOG" id="ENOG502S5C0">
    <property type="taxonomic scope" value="Eukaryota"/>
</dbReference>
<dbReference type="HOGENOM" id="CLU_1050442_0_0_1"/>
<dbReference type="InParanoid" id="P53262"/>
<dbReference type="OMA" id="HINSKDY"/>
<dbReference type="OrthoDB" id="9985059at2759"/>
<dbReference type="BioCyc" id="YEAST:G3O-30816-MONOMER"/>
<dbReference type="BioGRID-ORCS" id="852998">
    <property type="hits" value="0 hits in 10 CRISPR screens"/>
</dbReference>
<dbReference type="PRO" id="PR:P53262"/>
<dbReference type="Proteomes" id="UP000002311">
    <property type="component" value="Chromosome VII"/>
</dbReference>
<dbReference type="RNAct" id="P53262">
    <property type="molecule type" value="protein"/>
</dbReference>
<dbReference type="GO" id="GO:0005789">
    <property type="term" value="C:endoplasmic reticulum membrane"/>
    <property type="evidence" value="ECO:0000314"/>
    <property type="project" value="SGD"/>
</dbReference>
<dbReference type="GO" id="GO:0000329">
    <property type="term" value="C:fungal-type vacuole membrane"/>
    <property type="evidence" value="ECO:0007005"/>
    <property type="project" value="SGD"/>
</dbReference>
<dbReference type="GO" id="GO:0000139">
    <property type="term" value="C:Golgi membrane"/>
    <property type="evidence" value="ECO:0000303"/>
    <property type="project" value="ComplexPortal"/>
</dbReference>
<dbReference type="GO" id="GO:0033176">
    <property type="term" value="C:proton-transporting V-type ATPase complex"/>
    <property type="evidence" value="ECO:0000353"/>
    <property type="project" value="ComplexPortal"/>
</dbReference>
<dbReference type="GO" id="GO:0016471">
    <property type="term" value="C:vacuolar proton-transporting V-type ATPase complex"/>
    <property type="evidence" value="ECO:0000353"/>
    <property type="project" value="ComplexPortal"/>
</dbReference>
<dbReference type="GO" id="GO:0000220">
    <property type="term" value="C:vacuolar proton-transporting V-type ATPase, V0 domain"/>
    <property type="evidence" value="ECO:0000314"/>
    <property type="project" value="UniProtKB"/>
</dbReference>
<dbReference type="GO" id="GO:0046961">
    <property type="term" value="F:proton-transporting ATPase activity, rotational mechanism"/>
    <property type="evidence" value="ECO:0000305"/>
    <property type="project" value="UniProtKB"/>
</dbReference>
<dbReference type="GO" id="GO:0048388">
    <property type="term" value="P:endosomal lumen acidification"/>
    <property type="evidence" value="ECO:0000303"/>
    <property type="project" value="ComplexPortal"/>
</dbReference>
<dbReference type="GO" id="GO:0061795">
    <property type="term" value="P:Golgi lumen acidification"/>
    <property type="evidence" value="ECO:0000303"/>
    <property type="project" value="ComplexPortal"/>
</dbReference>
<dbReference type="GO" id="GO:0065003">
    <property type="term" value="P:protein-containing complex assembly"/>
    <property type="evidence" value="ECO:0000315"/>
    <property type="project" value="SGD"/>
</dbReference>
<dbReference type="GO" id="GO:1902600">
    <property type="term" value="P:proton transmembrane transport"/>
    <property type="evidence" value="ECO:0000314"/>
    <property type="project" value="ComplexPortal"/>
</dbReference>
<dbReference type="GO" id="GO:0007035">
    <property type="term" value="P:vacuolar acidification"/>
    <property type="evidence" value="ECO:0000303"/>
    <property type="project" value="ComplexPortal"/>
</dbReference>
<dbReference type="InterPro" id="IPR046756">
    <property type="entry name" value="VAS1/VOA1_TM"/>
</dbReference>
<dbReference type="Pfam" id="PF20520">
    <property type="entry name" value="Ac45-VOA1_TM"/>
    <property type="match status" value="1"/>
</dbReference>
<keyword id="KW-0002">3D-structure</keyword>
<keyword id="KW-0903">Direct protein sequencing</keyword>
<keyword id="KW-0256">Endoplasmic reticulum</keyword>
<keyword id="KW-0325">Glycoprotein</keyword>
<keyword id="KW-0472">Membrane</keyword>
<keyword id="KW-1185">Reference proteome</keyword>
<keyword id="KW-0732">Signal</keyword>
<keyword id="KW-0812">Transmembrane</keyword>
<keyword id="KW-1133">Transmembrane helix</keyword>
<keyword id="KW-0926">Vacuole</keyword>
<sequence>MVFGQLYALFIFTLSCCISKTVQADSSKESSSFISFDKESNWDTISTISSTADVISSVDSAIAVFEFDNFSLLDNLMIDEEYPFFNRFFANDVSLTVHDDSPLNISQSLSPIMEQFTVDELPESASDLLYEYSLDDKSIVLFKFTSDAYDLKKLDEFIDSCLSFLEDKSGDNLTVVINSLGWAFEDEDGDDEYATEETLSHHDNNKGKEGDDDILSSIWTEGLLMCLIVSALLLFILIVALSWISNLDITYGALEKSTNPIKKNN</sequence>